<organism>
    <name type="scientific">Mesomycoplasma hyopneumoniae (strain 232)</name>
    <name type="common">Mycoplasma hyopneumoniae</name>
    <dbReference type="NCBI Taxonomy" id="295358"/>
    <lineage>
        <taxon>Bacteria</taxon>
        <taxon>Bacillati</taxon>
        <taxon>Mycoplasmatota</taxon>
        <taxon>Mycoplasmoidales</taxon>
        <taxon>Metamycoplasmataceae</taxon>
        <taxon>Mesomycoplasma</taxon>
    </lineage>
</organism>
<proteinExistence type="inferred from homology"/>
<accession>Q601K7</accession>
<protein>
    <recommendedName>
        <fullName evidence="1">Large ribosomal subunit protein uL16</fullName>
    </recommendedName>
    <alternativeName>
        <fullName evidence="2">50S ribosomal protein L16</fullName>
    </alternativeName>
</protein>
<gene>
    <name evidence="1" type="primary">rplP</name>
    <name evidence="1" type="synonym">rpl16</name>
    <name type="ordered locus">mhp195</name>
</gene>
<comment type="function">
    <text evidence="1">Binds 23S rRNA and is also seen to make contacts with the A and possibly P site tRNAs.</text>
</comment>
<comment type="subunit">
    <text evidence="1">Part of the 50S ribosomal subunit.</text>
</comment>
<comment type="similarity">
    <text evidence="1">Belongs to the universal ribosomal protein uL16 family.</text>
</comment>
<sequence length="136" mass="15185">MLQPKKTKHRKTFRLYHDKRDAHSGNFVAFGDYGLQATGSAWVSAAQIEAARIAITRRMGREGQVIIRVFPHLALTSKPIGVRMGSGKGSVDRWVAVVKRNTILFEVRGVKDEIARDALRLGGHKLPLKWKIVATV</sequence>
<dbReference type="EMBL" id="AE017332">
    <property type="protein sequence ID" value="AAV27451.1"/>
    <property type="molecule type" value="Genomic_DNA"/>
</dbReference>
<dbReference type="RefSeq" id="WP_011206032.1">
    <property type="nucleotide sequence ID" value="NC_006360.1"/>
</dbReference>
<dbReference type="SMR" id="Q601K7"/>
<dbReference type="GeneID" id="41334486"/>
<dbReference type="KEGG" id="mhy:mhp195"/>
<dbReference type="eggNOG" id="COG0197">
    <property type="taxonomic scope" value="Bacteria"/>
</dbReference>
<dbReference type="HOGENOM" id="CLU_078858_2_1_14"/>
<dbReference type="PhylomeDB" id="Q601K7"/>
<dbReference type="Proteomes" id="UP000006822">
    <property type="component" value="Chromosome"/>
</dbReference>
<dbReference type="GO" id="GO:0022625">
    <property type="term" value="C:cytosolic large ribosomal subunit"/>
    <property type="evidence" value="ECO:0007669"/>
    <property type="project" value="TreeGrafter"/>
</dbReference>
<dbReference type="GO" id="GO:0019843">
    <property type="term" value="F:rRNA binding"/>
    <property type="evidence" value="ECO:0007669"/>
    <property type="project" value="UniProtKB-UniRule"/>
</dbReference>
<dbReference type="GO" id="GO:0003735">
    <property type="term" value="F:structural constituent of ribosome"/>
    <property type="evidence" value="ECO:0007669"/>
    <property type="project" value="InterPro"/>
</dbReference>
<dbReference type="GO" id="GO:0000049">
    <property type="term" value="F:tRNA binding"/>
    <property type="evidence" value="ECO:0007669"/>
    <property type="project" value="UniProtKB-KW"/>
</dbReference>
<dbReference type="GO" id="GO:0006412">
    <property type="term" value="P:translation"/>
    <property type="evidence" value="ECO:0007669"/>
    <property type="project" value="UniProtKB-UniRule"/>
</dbReference>
<dbReference type="CDD" id="cd01433">
    <property type="entry name" value="Ribosomal_L16_L10e"/>
    <property type="match status" value="1"/>
</dbReference>
<dbReference type="FunFam" id="3.90.1170.10:FF:000001">
    <property type="entry name" value="50S ribosomal protein L16"/>
    <property type="match status" value="1"/>
</dbReference>
<dbReference type="Gene3D" id="3.90.1170.10">
    <property type="entry name" value="Ribosomal protein L10e/L16"/>
    <property type="match status" value="1"/>
</dbReference>
<dbReference type="HAMAP" id="MF_01342">
    <property type="entry name" value="Ribosomal_uL16"/>
    <property type="match status" value="1"/>
</dbReference>
<dbReference type="InterPro" id="IPR047873">
    <property type="entry name" value="Ribosomal_uL16"/>
</dbReference>
<dbReference type="InterPro" id="IPR000114">
    <property type="entry name" value="Ribosomal_uL16_bact-type"/>
</dbReference>
<dbReference type="InterPro" id="IPR020798">
    <property type="entry name" value="Ribosomal_uL16_CS"/>
</dbReference>
<dbReference type="InterPro" id="IPR016180">
    <property type="entry name" value="Ribosomal_uL16_dom"/>
</dbReference>
<dbReference type="InterPro" id="IPR036920">
    <property type="entry name" value="Ribosomal_uL16_sf"/>
</dbReference>
<dbReference type="NCBIfam" id="TIGR01164">
    <property type="entry name" value="rplP_bact"/>
    <property type="match status" value="1"/>
</dbReference>
<dbReference type="PANTHER" id="PTHR12220">
    <property type="entry name" value="50S/60S RIBOSOMAL PROTEIN L16"/>
    <property type="match status" value="1"/>
</dbReference>
<dbReference type="PANTHER" id="PTHR12220:SF13">
    <property type="entry name" value="LARGE RIBOSOMAL SUBUNIT PROTEIN UL16M"/>
    <property type="match status" value="1"/>
</dbReference>
<dbReference type="Pfam" id="PF00252">
    <property type="entry name" value="Ribosomal_L16"/>
    <property type="match status" value="1"/>
</dbReference>
<dbReference type="PRINTS" id="PR00060">
    <property type="entry name" value="RIBOSOMALL16"/>
</dbReference>
<dbReference type="SUPFAM" id="SSF54686">
    <property type="entry name" value="Ribosomal protein L16p/L10e"/>
    <property type="match status" value="1"/>
</dbReference>
<dbReference type="PROSITE" id="PS00701">
    <property type="entry name" value="RIBOSOMAL_L16_2"/>
    <property type="match status" value="1"/>
</dbReference>
<feature type="chain" id="PRO_0000062142" description="Large ribosomal subunit protein uL16">
    <location>
        <begin position="1"/>
        <end position="136"/>
    </location>
</feature>
<evidence type="ECO:0000255" key="1">
    <source>
        <dbReference type="HAMAP-Rule" id="MF_01342"/>
    </source>
</evidence>
<evidence type="ECO:0000305" key="2"/>
<reference key="1">
    <citation type="journal article" date="2004" name="J. Bacteriol.">
        <title>The genome sequence of Mycoplasma hyopneumoniae strain 232, the agent of swine mycoplasmosis.</title>
        <authorList>
            <person name="Minion F.C."/>
            <person name="Lefkowitz E.J."/>
            <person name="Madsen M.L."/>
            <person name="Cleary B.J."/>
            <person name="Swartzell S.M."/>
            <person name="Mahairas G.G."/>
        </authorList>
    </citation>
    <scope>NUCLEOTIDE SEQUENCE [LARGE SCALE GENOMIC DNA]</scope>
    <source>
        <strain>232</strain>
    </source>
</reference>
<keyword id="KW-0687">Ribonucleoprotein</keyword>
<keyword id="KW-0689">Ribosomal protein</keyword>
<keyword id="KW-0694">RNA-binding</keyword>
<keyword id="KW-0699">rRNA-binding</keyword>
<keyword id="KW-0820">tRNA-binding</keyword>
<name>RL16_MESH2</name>